<accession>Q58449</accession>
<proteinExistence type="predicted"/>
<protein>
    <recommendedName>
        <fullName>Uncharacterized protein MJ1049</fullName>
    </recommendedName>
</protein>
<keyword id="KW-1185">Reference proteome</keyword>
<sequence>MVIKKIIKKIRGNKDLPKPIEVPDEEYIVIGEEKPAYILEEESETESEVLGLEHKEKEEVKEVEEVVRVEKILPKLYVVRIKHPLDFENIKDKIPEYDVVIVNFEEVPFESILKELNEFRDYMSILNFKLGFVAENVLLAYRDDVILDKYVSNITDDAENV</sequence>
<name>Y1049_METJA</name>
<reference key="1">
    <citation type="journal article" date="1996" name="Science">
        <title>Complete genome sequence of the methanogenic archaeon, Methanococcus jannaschii.</title>
        <authorList>
            <person name="Bult C.J."/>
            <person name="White O."/>
            <person name="Olsen G.J."/>
            <person name="Zhou L."/>
            <person name="Fleischmann R.D."/>
            <person name="Sutton G.G."/>
            <person name="Blake J.A."/>
            <person name="FitzGerald L.M."/>
            <person name="Clayton R.A."/>
            <person name="Gocayne J.D."/>
            <person name="Kerlavage A.R."/>
            <person name="Dougherty B.A."/>
            <person name="Tomb J.-F."/>
            <person name="Adams M.D."/>
            <person name="Reich C.I."/>
            <person name="Overbeek R."/>
            <person name="Kirkness E.F."/>
            <person name="Weinstock K.G."/>
            <person name="Merrick J.M."/>
            <person name="Glodek A."/>
            <person name="Scott J.L."/>
            <person name="Geoghagen N.S.M."/>
            <person name="Weidman J.F."/>
            <person name="Fuhrmann J.L."/>
            <person name="Nguyen D."/>
            <person name="Utterback T.R."/>
            <person name="Kelley J.M."/>
            <person name="Peterson J.D."/>
            <person name="Sadow P.W."/>
            <person name="Hanna M.C."/>
            <person name="Cotton M.D."/>
            <person name="Roberts K.M."/>
            <person name="Hurst M.A."/>
            <person name="Kaine B.P."/>
            <person name="Borodovsky M."/>
            <person name="Klenk H.-P."/>
            <person name="Fraser C.M."/>
            <person name="Smith H.O."/>
            <person name="Woese C.R."/>
            <person name="Venter J.C."/>
        </authorList>
    </citation>
    <scope>NUCLEOTIDE SEQUENCE [LARGE SCALE GENOMIC DNA]</scope>
    <source>
        <strain>ATCC 43067 / DSM 2661 / JAL-1 / JCM 10045 / NBRC 100440</strain>
    </source>
</reference>
<feature type="chain" id="PRO_0000107152" description="Uncharacterized protein MJ1049">
    <location>
        <begin position="1"/>
        <end position="161"/>
    </location>
</feature>
<gene>
    <name type="ordered locus">MJ1049</name>
</gene>
<organism>
    <name type="scientific">Methanocaldococcus jannaschii (strain ATCC 43067 / DSM 2661 / JAL-1 / JCM 10045 / NBRC 100440)</name>
    <name type="common">Methanococcus jannaschii</name>
    <dbReference type="NCBI Taxonomy" id="243232"/>
    <lineage>
        <taxon>Archaea</taxon>
        <taxon>Methanobacteriati</taxon>
        <taxon>Methanobacteriota</taxon>
        <taxon>Methanomada group</taxon>
        <taxon>Methanococci</taxon>
        <taxon>Methanococcales</taxon>
        <taxon>Methanocaldococcaceae</taxon>
        <taxon>Methanocaldococcus</taxon>
    </lineage>
</organism>
<dbReference type="EMBL" id="L77117">
    <property type="protein sequence ID" value="AAB99059.1"/>
    <property type="molecule type" value="Genomic_DNA"/>
</dbReference>
<dbReference type="PIR" id="H64430">
    <property type="entry name" value="H64430"/>
</dbReference>
<dbReference type="RefSeq" id="WP_010870562.1">
    <property type="nucleotide sequence ID" value="NC_000909.1"/>
</dbReference>
<dbReference type="SMR" id="Q58449"/>
<dbReference type="FunCoup" id="Q58449">
    <property type="interactions" value="6"/>
</dbReference>
<dbReference type="STRING" id="243232.MJ_1049"/>
<dbReference type="PaxDb" id="243232-MJ_1049"/>
<dbReference type="EnsemblBacteria" id="AAB99059">
    <property type="protein sequence ID" value="AAB99059"/>
    <property type="gene ID" value="MJ_1049"/>
</dbReference>
<dbReference type="GeneID" id="1451946"/>
<dbReference type="KEGG" id="mja:MJ_1049"/>
<dbReference type="eggNOG" id="arCOG05066">
    <property type="taxonomic scope" value="Archaea"/>
</dbReference>
<dbReference type="HOGENOM" id="CLU_1736435_0_0_2"/>
<dbReference type="InParanoid" id="Q58449"/>
<dbReference type="OrthoDB" id="59585at2157"/>
<dbReference type="Proteomes" id="UP000000805">
    <property type="component" value="Chromosome"/>
</dbReference>